<proteinExistence type="evidence at protein level"/>
<organism>
    <name type="scientific">Maedi visna virus (strain 1514)</name>
    <name type="common">MVV</name>
    <name type="synonym">Visna lentivirus</name>
    <dbReference type="NCBI Taxonomy" id="11742"/>
    <lineage>
        <taxon>Viruses</taxon>
        <taxon>Riboviria</taxon>
        <taxon>Pararnavirae</taxon>
        <taxon>Artverviricota</taxon>
        <taxon>Revtraviricetes</taxon>
        <taxon>Ortervirales</taxon>
        <taxon>Retroviridae</taxon>
        <taxon>Orthoretrovirinae</taxon>
        <taxon>Lentivirus</taxon>
        <taxon>Visna-maedi virus</taxon>
    </lineage>
</organism>
<organismHost>
    <name type="scientific">Ovis aries</name>
    <name type="common">Sheep</name>
    <dbReference type="NCBI Taxonomy" id="9940"/>
</organismHost>
<protein>
    <recommendedName>
        <fullName>Envelope glycoprotein gp160</fullName>
    </recommendedName>
    <alternativeName>
        <fullName>Env polyprotein</fullName>
    </alternativeName>
    <component>
        <recommendedName>
            <fullName>Surface protein</fullName>
        </recommendedName>
        <alternativeName>
            <fullName>Glycoprotein 135</fullName>
            <shortName>gp135</shortName>
        </alternativeName>
    </component>
    <component>
        <recommendedName>
            <fullName>Transmembrane protein</fullName>
        </recommendedName>
        <alternativeName>
            <fullName>Glycoprotein 46</fullName>
            <shortName>gp46</shortName>
        </alternativeName>
    </component>
</protein>
<name>ENV_VILV</name>
<reference key="1">
    <citation type="journal article" date="1985" name="Cell">
        <title>Nucleotide sequence of the visna lentivirus: relationship to the AIDS virus.</title>
        <authorList>
            <person name="Sonigo P."/>
            <person name="Alizon M."/>
            <person name="Staskus K."/>
            <person name="Klatzmann D."/>
            <person name="Cole S."/>
            <person name="Danos O."/>
            <person name="Retzel E."/>
            <person name="Tiollais P."/>
            <person name="Haase A."/>
            <person name="Wain-Hobson S."/>
        </authorList>
    </citation>
    <scope>NUCLEOTIDE SEQUENCE [GENOMIC DNA]</scope>
</reference>
<reference key="2">
    <citation type="journal article" date="1987" name="J. Virol.">
        <title>The visna virus genome: evidence for a hypervariable site in the env gene and sequence homology among lentivirus envelope proteins.</title>
        <authorList>
            <person name="Braun M.J."/>
            <person name="Clements J.E."/>
            <person name="Gonda M.A."/>
        </authorList>
    </citation>
    <scope>NUCLEOTIDE SEQUENCE [GENOMIC RNA]</scope>
</reference>
<reference key="3">
    <citation type="journal article" date="2001" name="Proc. Natl. Acad. Sci. U.S.A.">
        <title>The trimer-of-hairpins motif in membrane fusion: Visna virus.</title>
        <authorList>
            <person name="Malashkevich V.N."/>
            <person name="Singh M."/>
            <person name="Kim P.S."/>
        </authorList>
    </citation>
    <scope>CHARACTERIZATION OF THE TRANSMEMBRANE PROTEIN</scope>
    <scope>FUNCTION IN FUSION</scope>
</reference>
<sequence>MASKESKPSRTTWRDMEPPLRETWNQVLQELVKRQQQEEEEQQGLVSGKKKSWVSIDLLGTEGKDIKKVNIWEPCEKWFAQVVWGVLWVLQIVLWGCLMWEVRKGNQCQAEEVIALVSDPGGFQRVQHVETVPVTCVTKNFTQWGCQPEGAYPDPELEYRNISREILEEVYKQDWPWNTYHWPLWQMENMRQWMKENEKEYKERTNKTKEDIDDLVAGRIRGRFCVPYPYALLRCEEWCWYPESINQETGHAEKIKINCTKAKAVSCTEKMPLAAVQRVYWEKEDEESMKFLNIKACNISLRCQDEGKSPGGCVQGYPIPKGAEIIPEAMKYLRGKKSRYGGIKDKNGELKLPLSVRVWVRMANLSGWVNGTPPYWSARINGSTGINGTRWYGVGTLHHLGYNISSNPEGGICNFTGELWIGGDRFPYYYKPSWNCSQNWTGHPVWHVFRYLDMTEHMTSRCIQRPKRHNITVGNGTITGNCSVTNWDGCNCTRSGNHLYNSTSGGLLVIICRQNSTITGIMGTNTNWTTMWNIYQNCSRCNNSSLDRTGSGTLGTVNNLKCSLPHRNESNKWTCKSQRDSYIAGRDFWGKVKAKYSCESNLGGLDSMMHQQMLLQRYQVIRVRAYTYGVVEMPQSYMEERGENRRSRRNLQRKKRGIGLVIVLAIMAIIAAAGAGLGVANAVQQSYTRTAVQSLANATAAQQEVLEASYAMVQHIAKGIRILEARVARVEALVDMMVYQELDCWHYQHYCVTSTRSEVANYVNWTRFKDNCTWQQWEEEIEQHEGNLSLLLREAALQVHIAQRDARRIPDAWKAIQEAFNWSSWFSWLKYIPWIIMGIVGLMCFRILMCVISMCLQAYKQVKQIRYTQVTVVIEAPVELEEKQKRNGDGTNGCASLEHERRTSHRSFIQIWRATWWAWKTSPWRHNWRTMPYITLLPILVIWQWMEENGWNGENQHKKKKERVDCQDREQMPTLENDYVEL</sequence>
<evidence type="ECO:0000250" key="1"/>
<evidence type="ECO:0000255" key="2"/>
<evidence type="ECO:0000305" key="3"/>
<dbReference type="EMBL" id="M10608">
    <property type="status" value="NOT_ANNOTATED_CDS"/>
    <property type="molecule type" value="Unassigned_DNA"/>
</dbReference>
<dbReference type="EMBL" id="M51543">
    <property type="status" value="NOT_ANNOTATED_CDS"/>
    <property type="molecule type" value="Genomic_RNA"/>
</dbReference>
<dbReference type="EMBL" id="A15114">
    <property type="protein sequence ID" value="CAA01216.1"/>
    <property type="molecule type" value="Unassigned_RNA"/>
</dbReference>
<dbReference type="BindingDB" id="P03379"/>
<dbReference type="ChEMBL" id="CHEMBL5827"/>
<dbReference type="GlyCosmos" id="P03379">
    <property type="glycosylation" value="28 sites, No reported glycans"/>
</dbReference>
<dbReference type="Proteomes" id="UP000106909">
    <property type="component" value="Genome"/>
</dbReference>
<dbReference type="Proteomes" id="UP000158691">
    <property type="component" value="Genome"/>
</dbReference>
<dbReference type="GO" id="GO:0020002">
    <property type="term" value="C:host cell plasma membrane"/>
    <property type="evidence" value="ECO:0007669"/>
    <property type="project" value="UniProtKB-SubCell"/>
</dbReference>
<dbReference type="GO" id="GO:0016020">
    <property type="term" value="C:membrane"/>
    <property type="evidence" value="ECO:0007669"/>
    <property type="project" value="UniProtKB-KW"/>
</dbReference>
<dbReference type="GO" id="GO:0019031">
    <property type="term" value="C:viral envelope"/>
    <property type="evidence" value="ECO:0007669"/>
    <property type="project" value="UniProtKB-KW"/>
</dbReference>
<dbReference type="GO" id="GO:0055036">
    <property type="term" value="C:virion membrane"/>
    <property type="evidence" value="ECO:0007669"/>
    <property type="project" value="UniProtKB-SubCell"/>
</dbReference>
<dbReference type="GO" id="GO:0046718">
    <property type="term" value="P:symbiont entry into host cell"/>
    <property type="evidence" value="ECO:0007669"/>
    <property type="project" value="UniProtKB-KW"/>
</dbReference>
<dbReference type="GO" id="GO:0019062">
    <property type="term" value="P:virion attachment to host cell"/>
    <property type="evidence" value="ECO:0007669"/>
    <property type="project" value="UniProtKB-KW"/>
</dbReference>
<dbReference type="Gene3D" id="1.20.5.440">
    <property type="entry name" value="ATP synthase delta/epsilon subunit, C-terminal domain"/>
    <property type="match status" value="1"/>
</dbReference>
<dbReference type="SUPFAM" id="SSF58069">
    <property type="entry name" value="Virus ectodomain"/>
    <property type="match status" value="1"/>
</dbReference>
<comment type="function">
    <text evidence="1">The surface protein (SU) attaches the virus to the host cell by binding to its receptor. This interaction triggers the refolding of the transmembrane protein (TM) and is thought to activate its fusogenic potential by unmasking its fusion peptide. Fusion occurs at the host cell plasma membrane (By similarity).</text>
</comment>
<comment type="function">
    <text evidence="1">The transmembrane protein (TM) acts as a class I viral fusion protein. Under the current model, the protein has at least 3 conformational states: pre-fusion native state, pre-hairpin intermediate state, and post-fusion hairpin state. During viral and target cell membrane fusion, the coiled coil regions (heptad repeats) assume a trimer-of-hairpins structure, positioning the fusion peptide in close proximity to the C-terminal region of the ectodomain. The formation of this structure appears to drive apposition and subsequent fusion of viral and target cell membranes. Membranes fusion leads to delivery of the nucleocapsid into the cytoplasm (By similarity).</text>
</comment>
<comment type="subunit">
    <text evidence="1">The mature envelope protein (Env) consists of a trimer of SU-TM heterodimers attached by noncovalent interactions or by a labile interchain disulfide bond.</text>
</comment>
<comment type="subcellular location">
    <molecule>Transmembrane protein</molecule>
    <subcellularLocation>
        <location evidence="1">Virion membrane</location>
        <topology evidence="1">Single-pass type I membrane protein</topology>
    </subcellularLocation>
    <subcellularLocation>
        <location evidence="1">Host cell membrane</location>
        <topology evidence="1">Single-pass type I membrane protein</topology>
    </subcellularLocation>
    <text evidence="1">It is probably concentrated at the site of budding and incorporated into the virions possibly by contacts between the cytoplasmic tail of Env and the N-terminus of Gag.</text>
</comment>
<comment type="subcellular location">
    <molecule>Surface protein</molecule>
    <subcellularLocation>
        <location evidence="1">Virion membrane</location>
        <topology evidence="1">Peripheral membrane protein</topology>
    </subcellularLocation>
    <subcellularLocation>
        <location evidence="1">Host cell membrane</location>
        <topology evidence="1">Peripheral membrane protein</topology>
    </subcellularLocation>
    <text evidence="1">The surface protein is not anchored to the viral envelope, but associates with the extravirion surface through its binding to TM. It is probably concentrated at the site of budding and incorporated into the virions possibly by contacts between the cytoplasmic tail of Env and the N-terminus of Gag (By similarity).</text>
</comment>
<comment type="PTM">
    <text evidence="1">Specific enzymatic cleavages in vivo yield mature proteins. Envelope glycoproteins are synthesized as an inactive precursor that is N-glycosylated and processed likely by host cell furin or by a furin-like protease in the Golgi to yield the mature SU and TM proteins. The cleavage site between SU and TM requires the minimal sequence [KR]-X-[KR]-R (By similarity).</text>
</comment>
<comment type="PTM">
    <text evidence="1">The transmembrane protein is palmitoylated.</text>
</comment>
<keyword id="KW-0165">Cleavage on pair of basic residues</keyword>
<keyword id="KW-0175">Coiled coil</keyword>
<keyword id="KW-1015">Disulfide bond</keyword>
<keyword id="KW-0325">Glycoprotein</keyword>
<keyword id="KW-1032">Host cell membrane</keyword>
<keyword id="KW-1043">Host membrane</keyword>
<keyword id="KW-0945">Host-virus interaction</keyword>
<keyword id="KW-0449">Lipoprotein</keyword>
<keyword id="KW-0472">Membrane</keyword>
<keyword id="KW-0564">Palmitate</keyword>
<keyword id="KW-0732">Signal</keyword>
<keyword id="KW-0812">Transmembrane</keyword>
<keyword id="KW-1133">Transmembrane helix</keyword>
<keyword id="KW-1161">Viral attachment to host cell</keyword>
<keyword id="KW-0261">Viral envelope protein</keyword>
<keyword id="KW-0946">Virion</keyword>
<keyword id="KW-1160">Virus entry into host cell</keyword>
<feature type="signal peptide" evidence="2">
    <location>
        <begin position="1"/>
        <end position="106"/>
    </location>
</feature>
<feature type="chain" id="PRO_0000239540" description="Envelope glycoprotein gp160">
    <location>
        <begin position="107"/>
        <end position="982"/>
    </location>
</feature>
<feature type="chain" id="PRO_0000038735" description="Surface protein" evidence="1">
    <location>
        <begin position="107"/>
        <end position="656"/>
    </location>
</feature>
<feature type="chain" id="PRO_0000038736" description="Transmembrane protein" evidence="1">
    <location>
        <begin position="657"/>
        <end position="982"/>
    </location>
</feature>
<feature type="topological domain" description="Extracellular" evidence="2">
    <location>
        <begin position="107"/>
        <end position="831"/>
    </location>
</feature>
<feature type="transmembrane region" description="Helical" evidence="2">
    <location>
        <begin position="832"/>
        <end position="852"/>
    </location>
</feature>
<feature type="topological domain" description="Cytoplasmic" evidence="2">
    <location>
        <begin position="853"/>
        <end position="982"/>
    </location>
</feature>
<feature type="region of interest" description="Fusion peptide">
    <location>
        <begin position="657"/>
        <end position="677"/>
    </location>
</feature>
<feature type="region of interest" description="Immunosuppression" evidence="1">
    <location>
        <begin position="723"/>
        <end position="738"/>
    </location>
</feature>
<feature type="coiled-coil region" evidence="2">
    <location>
        <begin position="689"/>
        <end position="738"/>
    </location>
</feature>
<feature type="coiled-coil region" evidence="2">
    <location>
        <begin position="779"/>
        <end position="814"/>
    </location>
</feature>
<feature type="site" description="Cleavage; by host" evidence="1">
    <location>
        <begin position="656"/>
        <end position="657"/>
    </location>
</feature>
<feature type="lipid moiety-binding region" description="S-palmitoyl cysteine; by host" evidence="1">
    <location>
        <position position="855"/>
    </location>
</feature>
<feature type="glycosylation site" description="N-linked (GlcNAc...) asparagine; by host" evidence="2">
    <location>
        <position position="140"/>
    </location>
</feature>
<feature type="glycosylation site" description="N-linked (GlcNAc...) asparagine; by host" evidence="2">
    <location>
        <position position="161"/>
    </location>
</feature>
<feature type="glycosylation site" description="N-linked (GlcNAc...) asparagine; by host" evidence="2">
    <location>
        <position position="206"/>
    </location>
</feature>
<feature type="glycosylation site" description="N-linked (GlcNAc...) asparagine; by host" evidence="2">
    <location>
        <position position="258"/>
    </location>
</feature>
<feature type="glycosylation site" description="N-linked (GlcNAc...) asparagine; by host" evidence="2">
    <location>
        <position position="298"/>
    </location>
</feature>
<feature type="glycosylation site" description="N-linked (GlcNAc...) asparagine; by host" evidence="2">
    <location>
        <position position="364"/>
    </location>
</feature>
<feature type="glycosylation site" description="N-linked (GlcNAc...) asparagine; by host" evidence="2">
    <location>
        <position position="381"/>
    </location>
</feature>
<feature type="glycosylation site" description="N-linked (GlcNAc...) asparagine; by host" evidence="2">
    <location>
        <position position="387"/>
    </location>
</feature>
<feature type="glycosylation site" description="N-linked (GlcNAc...) asparagine; by host" evidence="2">
    <location>
        <position position="403"/>
    </location>
</feature>
<feature type="glycosylation site" description="N-linked (GlcNAc...) asparagine; by host" evidence="2">
    <location>
        <position position="414"/>
    </location>
</feature>
<feature type="glycosylation site" description="N-linked (GlcNAc...) asparagine; by host" evidence="2">
    <location>
        <position position="435"/>
    </location>
</feature>
<feature type="glycosylation site" description="N-linked (GlcNAc...) asparagine; by host" evidence="2">
    <location>
        <position position="439"/>
    </location>
</feature>
<feature type="glycosylation site" description="N-linked (GlcNAc...) asparagine; by host" evidence="2">
    <location>
        <position position="470"/>
    </location>
</feature>
<feature type="glycosylation site" description="N-linked (GlcNAc...) asparagine; by host" evidence="2">
    <location>
        <position position="475"/>
    </location>
</feature>
<feature type="glycosylation site" description="N-linked (GlcNAc...) asparagine; by host" evidence="2">
    <location>
        <position position="481"/>
    </location>
</feature>
<feature type="glycosylation site" description="N-linked (GlcNAc...) asparagine; by host" evidence="2">
    <location>
        <position position="491"/>
    </location>
</feature>
<feature type="glycosylation site" description="N-linked (GlcNAc...) asparagine; by host" evidence="2">
    <location>
        <position position="501"/>
    </location>
</feature>
<feature type="glycosylation site" description="N-linked (GlcNAc...) asparagine; by host" evidence="2">
    <location>
        <position position="515"/>
    </location>
</feature>
<feature type="glycosylation site" description="N-linked (GlcNAc...) asparagine; by host" evidence="2">
    <location>
        <position position="527"/>
    </location>
</feature>
<feature type="glycosylation site" description="N-linked (GlcNAc...) asparagine; by host" evidence="2">
    <location>
        <position position="537"/>
    </location>
</feature>
<feature type="glycosylation site" description="N-linked (GlcNAc...) asparagine; by host" evidence="2">
    <location>
        <position position="542"/>
    </location>
</feature>
<feature type="glycosylation site" description="N-linked (GlcNAc...) asparagine; by host" evidence="2">
    <location>
        <position position="543"/>
    </location>
</feature>
<feature type="glycosylation site" description="N-linked (GlcNAc...) asparagine; by host" evidence="2">
    <location>
        <position position="568"/>
    </location>
</feature>
<feature type="glycosylation site" description="N-linked (GlcNAc...) asparagine; by host" evidence="2">
    <location>
        <position position="697"/>
    </location>
</feature>
<feature type="glycosylation site" description="N-linked (GlcNAc...) asparagine; by host" evidence="2">
    <location>
        <position position="764"/>
    </location>
</feature>
<feature type="glycosylation site" description="N-linked (GlcNAc...) asparagine; by host" evidence="2">
    <location>
        <position position="771"/>
    </location>
</feature>
<feature type="glycosylation site" description="N-linked (GlcNAc...) asparagine; by host" evidence="2">
    <location>
        <position position="787"/>
    </location>
</feature>
<feature type="glycosylation site" description="N-linked (GlcNAc...) asparagine; by host" evidence="2">
    <location>
        <position position="821"/>
    </location>
</feature>
<feature type="sequence conflict" description="In Ref. 2." evidence="3" ref="2">
    <original>T</original>
    <variation>M</variation>
    <location>
        <position position="12"/>
    </location>
</feature>
<feature type="sequence conflict" description="In Ref. 2." evidence="3" ref="2">
    <original>S</original>
    <variation>N</variation>
    <location>
        <position position="118"/>
    </location>
</feature>
<feature type="sequence conflict" description="In Ref. 2." evidence="3" ref="2">
    <original>K</original>
    <variation>R</variation>
    <location>
        <position position="283"/>
    </location>
</feature>
<feature type="sequence conflict" description="In Ref. 2." evidence="3" ref="2">
    <original>ER</original>
    <variation>AQ</variation>
    <location>
        <begin position="640"/>
        <end position="641"/>
    </location>
</feature>
<feature type="sequence conflict" description="In Ref. 2." evidence="3" ref="2">
    <original>R</original>
    <variation>K</variation>
    <location>
        <position position="645"/>
    </location>
</feature>
<gene>
    <name type="primary">env</name>
</gene>
<accession>P03379</accession>